<dbReference type="EC" id="3.4.14.10" evidence="3"/>
<dbReference type="EMBL" id="AC022472">
    <property type="protein sequence ID" value="AAF79897.1"/>
    <property type="molecule type" value="Genomic_DNA"/>
</dbReference>
<dbReference type="EMBL" id="CP002684">
    <property type="protein sequence ID" value="AEE29945.1"/>
    <property type="molecule type" value="Genomic_DNA"/>
</dbReference>
<dbReference type="EMBL" id="CP002684">
    <property type="protein sequence ID" value="AEE29946.1"/>
    <property type="molecule type" value="Genomic_DNA"/>
</dbReference>
<dbReference type="EMBL" id="AK228874">
    <property type="protein sequence ID" value="BAF00765.1"/>
    <property type="molecule type" value="mRNA"/>
</dbReference>
<dbReference type="EMBL" id="AY087872">
    <property type="protein sequence ID" value="AAM65424.1"/>
    <property type="molecule type" value="mRNA"/>
</dbReference>
<dbReference type="PIR" id="D86335">
    <property type="entry name" value="D86335"/>
</dbReference>
<dbReference type="RefSeq" id="NP_001031070.1">
    <molecule id="Q9LNU1-2"/>
    <property type="nucleotide sequence ID" value="NM_001035993.1"/>
</dbReference>
<dbReference type="RefSeq" id="NP_564107.1">
    <molecule id="Q9LNU1-1"/>
    <property type="nucleotide sequence ID" value="NM_101870.3"/>
</dbReference>
<dbReference type="SMR" id="Q9LNU1"/>
<dbReference type="FunCoup" id="Q9LNU1">
    <property type="interactions" value="24"/>
</dbReference>
<dbReference type="STRING" id="3702.Q9LNU1"/>
<dbReference type="MEROPS" id="S08.A22"/>
<dbReference type="iPTMnet" id="Q9LNU1"/>
<dbReference type="PaxDb" id="3702-AT1G20160.1"/>
<dbReference type="ProteomicsDB" id="220450">
    <molecule id="Q9LNU1-1"/>
</dbReference>
<dbReference type="EnsemblPlants" id="AT1G20160.1">
    <molecule id="Q9LNU1-1"/>
    <property type="protein sequence ID" value="AT1G20160.1"/>
    <property type="gene ID" value="AT1G20160"/>
</dbReference>
<dbReference type="EnsemblPlants" id="AT1G20160.2">
    <molecule id="Q9LNU1-2"/>
    <property type="protein sequence ID" value="AT1G20160.2"/>
    <property type="gene ID" value="AT1G20160"/>
</dbReference>
<dbReference type="GeneID" id="838606"/>
<dbReference type="Gramene" id="AT1G20160.1">
    <molecule id="Q9LNU1-1"/>
    <property type="protein sequence ID" value="AT1G20160.1"/>
    <property type="gene ID" value="AT1G20160"/>
</dbReference>
<dbReference type="Gramene" id="AT1G20160.2">
    <molecule id="Q9LNU1-2"/>
    <property type="protein sequence ID" value="AT1G20160.2"/>
    <property type="gene ID" value="AT1G20160"/>
</dbReference>
<dbReference type="KEGG" id="ath:AT1G20160"/>
<dbReference type="Araport" id="AT1G20160"/>
<dbReference type="TAIR" id="AT1G20160">
    <property type="gene designation" value="ATSBT5.2"/>
</dbReference>
<dbReference type="eggNOG" id="ENOG502QUSK">
    <property type="taxonomic scope" value="Eukaryota"/>
</dbReference>
<dbReference type="InParanoid" id="Q9LNU1"/>
<dbReference type="PhylomeDB" id="Q9LNU1"/>
<dbReference type="PRO" id="PR:Q9LNU1"/>
<dbReference type="Proteomes" id="UP000006548">
    <property type="component" value="Chromosome 1"/>
</dbReference>
<dbReference type="ExpressionAtlas" id="Q9LNU1">
    <property type="expression patterns" value="baseline and differential"/>
</dbReference>
<dbReference type="GO" id="GO:0048046">
    <property type="term" value="C:apoplast"/>
    <property type="evidence" value="ECO:0007005"/>
    <property type="project" value="TAIR"/>
</dbReference>
<dbReference type="GO" id="GO:0004252">
    <property type="term" value="F:serine-type endopeptidase activity"/>
    <property type="evidence" value="ECO:0000303"/>
    <property type="project" value="UniProtKB"/>
</dbReference>
<dbReference type="GO" id="GO:0008236">
    <property type="term" value="F:serine-type peptidase activity"/>
    <property type="evidence" value="ECO:0000314"/>
    <property type="project" value="TAIR"/>
</dbReference>
<dbReference type="GO" id="GO:0008240">
    <property type="term" value="F:tripeptidyl-peptidase activity"/>
    <property type="evidence" value="ECO:0007669"/>
    <property type="project" value="UniProtKB-EC"/>
</dbReference>
<dbReference type="GO" id="GO:1900425">
    <property type="term" value="P:negative regulation of defense response to bacterium"/>
    <property type="evidence" value="ECO:0000315"/>
    <property type="project" value="TAIR"/>
</dbReference>
<dbReference type="GO" id="GO:2000122">
    <property type="term" value="P:negative regulation of stomatal complex development"/>
    <property type="evidence" value="ECO:0000315"/>
    <property type="project" value="UniProtKB"/>
</dbReference>
<dbReference type="GO" id="GO:0006508">
    <property type="term" value="P:proteolysis"/>
    <property type="evidence" value="ECO:0000314"/>
    <property type="project" value="TAIR"/>
</dbReference>
<dbReference type="GO" id="GO:2000038">
    <property type="term" value="P:regulation of stomatal complex development"/>
    <property type="evidence" value="ECO:0000315"/>
    <property type="project" value="TAIR"/>
</dbReference>
<dbReference type="GO" id="GO:0010037">
    <property type="term" value="P:response to carbon dioxide"/>
    <property type="evidence" value="ECO:0000315"/>
    <property type="project" value="TAIR"/>
</dbReference>
<dbReference type="CDD" id="cd02120">
    <property type="entry name" value="PA_subtilisin_like"/>
    <property type="match status" value="1"/>
</dbReference>
<dbReference type="CDD" id="cd04852">
    <property type="entry name" value="Peptidases_S8_3"/>
    <property type="match status" value="1"/>
</dbReference>
<dbReference type="FunFam" id="3.40.50.200:FF:000006">
    <property type="entry name" value="Subtilisin-like protease SBT1.5"/>
    <property type="match status" value="1"/>
</dbReference>
<dbReference type="FunFam" id="3.50.30.30:FF:000005">
    <property type="entry name" value="subtilisin-like protease SBT1.5"/>
    <property type="match status" value="1"/>
</dbReference>
<dbReference type="FunFam" id="2.60.40.2310:FF:000003">
    <property type="entry name" value="Subtilisin-like protease SBT4.1"/>
    <property type="match status" value="1"/>
</dbReference>
<dbReference type="Gene3D" id="2.60.40.2310">
    <property type="match status" value="1"/>
</dbReference>
<dbReference type="Gene3D" id="3.50.30.30">
    <property type="match status" value="1"/>
</dbReference>
<dbReference type="Gene3D" id="3.30.70.80">
    <property type="entry name" value="Peptidase S8 propeptide/proteinase inhibitor I9"/>
    <property type="match status" value="1"/>
</dbReference>
<dbReference type="Gene3D" id="3.40.50.200">
    <property type="entry name" value="Peptidase S8/S53 domain"/>
    <property type="match status" value="1"/>
</dbReference>
<dbReference type="InterPro" id="IPR000209">
    <property type="entry name" value="Peptidase_S8/S53_dom"/>
</dbReference>
<dbReference type="InterPro" id="IPR036852">
    <property type="entry name" value="Peptidase_S8/S53_dom_sf"/>
</dbReference>
<dbReference type="InterPro" id="IPR022398">
    <property type="entry name" value="Peptidase_S8_His-AS"/>
</dbReference>
<dbReference type="InterPro" id="IPR023828">
    <property type="entry name" value="Peptidase_S8_Ser-AS"/>
</dbReference>
<dbReference type="InterPro" id="IPR015500">
    <property type="entry name" value="Peptidase_S8_subtilisin-rel"/>
</dbReference>
<dbReference type="InterPro" id="IPR034197">
    <property type="entry name" value="Peptidases_S8_3"/>
</dbReference>
<dbReference type="InterPro" id="IPR010259">
    <property type="entry name" value="S8pro/Inhibitor_I9"/>
</dbReference>
<dbReference type="InterPro" id="IPR037045">
    <property type="entry name" value="S8pro/Inhibitor_I9_sf"/>
</dbReference>
<dbReference type="InterPro" id="IPR045051">
    <property type="entry name" value="SBT"/>
</dbReference>
<dbReference type="InterPro" id="IPR041469">
    <property type="entry name" value="Subtilisin-like_FN3"/>
</dbReference>
<dbReference type="PANTHER" id="PTHR10795">
    <property type="entry name" value="PROPROTEIN CONVERTASE SUBTILISIN/KEXIN"/>
    <property type="match status" value="1"/>
</dbReference>
<dbReference type="Pfam" id="PF17766">
    <property type="entry name" value="fn3_6"/>
    <property type="match status" value="1"/>
</dbReference>
<dbReference type="Pfam" id="PF05922">
    <property type="entry name" value="Inhibitor_I9"/>
    <property type="match status" value="1"/>
</dbReference>
<dbReference type="Pfam" id="PF00082">
    <property type="entry name" value="Peptidase_S8"/>
    <property type="match status" value="1"/>
</dbReference>
<dbReference type="PRINTS" id="PR00723">
    <property type="entry name" value="SUBTILISIN"/>
</dbReference>
<dbReference type="SUPFAM" id="SSF52743">
    <property type="entry name" value="Subtilisin-like"/>
    <property type="match status" value="1"/>
</dbReference>
<dbReference type="PROSITE" id="PS51892">
    <property type="entry name" value="SUBTILASE"/>
    <property type="match status" value="1"/>
</dbReference>
<dbReference type="PROSITE" id="PS00137">
    <property type="entry name" value="SUBTILASE_HIS"/>
    <property type="match status" value="1"/>
</dbReference>
<dbReference type="PROSITE" id="PS00138">
    <property type="entry name" value="SUBTILASE_SER"/>
    <property type="match status" value="1"/>
</dbReference>
<accession>Q9LNU1</accession>
<accession>F4HSQ4</accession>
<accession>Q8LAE1</accession>
<evidence type="ECO:0000255" key="1"/>
<evidence type="ECO:0000255" key="2">
    <source>
        <dbReference type="PROSITE-ProRule" id="PRU01240"/>
    </source>
</evidence>
<evidence type="ECO:0000255" key="3">
    <source>
        <dbReference type="PROSITE-ProRule" id="PRU10081"/>
    </source>
</evidence>
<evidence type="ECO:0000269" key="4">
    <source>
    </source>
</evidence>
<evidence type="ECO:0000303" key="5">
    <source>
    </source>
</evidence>
<evidence type="ECO:0000305" key="6"/>
<evidence type="ECO:0000312" key="7">
    <source>
        <dbReference type="Araport" id="AT1G20160"/>
    </source>
</evidence>
<evidence type="ECO:0000312" key="8">
    <source>
        <dbReference type="EMBL" id="AAF79897.1"/>
    </source>
</evidence>
<proteinExistence type="evidence at transcript level"/>
<feature type="signal peptide" evidence="1">
    <location>
        <begin position="1"/>
        <end position="27"/>
    </location>
</feature>
<feature type="chain" id="PRO_0000430504" description="CO(2)-response secreted protease">
    <location>
        <begin position="28"/>
        <end position="769"/>
    </location>
</feature>
<feature type="domain" description="Inhibitor I9" evidence="1">
    <location>
        <begin position="35"/>
        <end position="108"/>
    </location>
</feature>
<feature type="domain" description="Peptidase S8" evidence="2">
    <location>
        <begin position="112"/>
        <end position="613"/>
    </location>
</feature>
<feature type="domain" description="PA" evidence="1">
    <location>
        <begin position="381"/>
        <end position="465"/>
    </location>
</feature>
<feature type="active site" description="Charge relay system" evidence="2">
    <location>
        <position position="145"/>
    </location>
</feature>
<feature type="active site" description="Charge relay system" evidence="2">
    <location>
        <position position="210"/>
    </location>
</feature>
<feature type="active site" description="Charge relay system" evidence="2">
    <location>
        <position position="546"/>
    </location>
</feature>
<feature type="splice variant" id="VSP_056784" description="In isoform 2." evidence="6">
    <location>
        <begin position="1"/>
        <end position="39"/>
    </location>
</feature>
<feature type="sequence conflict" description="In Ref. 4; AAM65424." evidence="6" ref="4">
    <original>G</original>
    <variation>V</variation>
    <location>
        <position position="34"/>
    </location>
</feature>
<feature type="sequence conflict" description="In Ref. 4; AAM65424." evidence="6" ref="4">
    <original>E</original>
    <variation>K</variation>
    <location>
        <position position="423"/>
    </location>
</feature>
<comment type="function">
    <text evidence="4">Mediates CO(2)-controlled stomatal development by cleaving peptide EPF2 (AC Q8LC53). Not active on peptides EPF1 (AC Q8S8I4) or stomagen (AC Q9SV72).</text>
</comment>
<comment type="catalytic activity">
    <reaction evidence="3">
        <text>Release of an N-terminal tripeptide from a polypeptide.</text>
        <dbReference type="EC" id="3.4.14.10"/>
    </reaction>
</comment>
<comment type="subcellular location">
    <subcellularLocation>
        <location evidence="4">Secreted</location>
        <location evidence="4">Cell wall</location>
    </subcellularLocation>
</comment>
<comment type="alternative products">
    <event type="alternative splicing"/>
    <isoform>
        <id>Q9LNU1-1</id>
        <name>1</name>
        <sequence type="displayed"/>
    </isoform>
    <isoform>
        <id>Q9LNU1-2</id>
        <name>2</name>
        <sequence type="described" ref="VSP_056784"/>
    </isoform>
</comment>
<comment type="tissue specificity">
    <text evidence="4">Expressed in roots, guard cells and meristemoid and pavement cells.</text>
</comment>
<comment type="induction">
    <text evidence="4">Induced by high CO(2).</text>
</comment>
<comment type="disruption phenotype">
    <text evidence="4">Increased stomata number at elevated CO(2) concentration and increased number of epidermal cells.</text>
</comment>
<comment type="similarity">
    <text evidence="2">Belongs to the peptidase S8 family.</text>
</comment>
<reference key="1">
    <citation type="journal article" date="2000" name="Nature">
        <title>Sequence and analysis of chromosome 1 of the plant Arabidopsis thaliana.</title>
        <authorList>
            <person name="Theologis A."/>
            <person name="Ecker J.R."/>
            <person name="Palm C.J."/>
            <person name="Federspiel N.A."/>
            <person name="Kaul S."/>
            <person name="White O."/>
            <person name="Alonso J."/>
            <person name="Altafi H."/>
            <person name="Araujo R."/>
            <person name="Bowman C.L."/>
            <person name="Brooks S.Y."/>
            <person name="Buehler E."/>
            <person name="Chan A."/>
            <person name="Chao Q."/>
            <person name="Chen H."/>
            <person name="Cheuk R.F."/>
            <person name="Chin C.W."/>
            <person name="Chung M.K."/>
            <person name="Conn L."/>
            <person name="Conway A.B."/>
            <person name="Conway A.R."/>
            <person name="Creasy T.H."/>
            <person name="Dewar K."/>
            <person name="Dunn P."/>
            <person name="Etgu P."/>
            <person name="Feldblyum T.V."/>
            <person name="Feng J.-D."/>
            <person name="Fong B."/>
            <person name="Fujii C.Y."/>
            <person name="Gill J.E."/>
            <person name="Goldsmith A.D."/>
            <person name="Haas B."/>
            <person name="Hansen N.F."/>
            <person name="Hughes B."/>
            <person name="Huizar L."/>
            <person name="Hunter J.L."/>
            <person name="Jenkins J."/>
            <person name="Johnson-Hopson C."/>
            <person name="Khan S."/>
            <person name="Khaykin E."/>
            <person name="Kim C.J."/>
            <person name="Koo H.L."/>
            <person name="Kremenetskaia I."/>
            <person name="Kurtz D.B."/>
            <person name="Kwan A."/>
            <person name="Lam B."/>
            <person name="Langin-Hooper S."/>
            <person name="Lee A."/>
            <person name="Lee J.M."/>
            <person name="Lenz C.A."/>
            <person name="Li J.H."/>
            <person name="Li Y.-P."/>
            <person name="Lin X."/>
            <person name="Liu S.X."/>
            <person name="Liu Z.A."/>
            <person name="Luros J.S."/>
            <person name="Maiti R."/>
            <person name="Marziali A."/>
            <person name="Militscher J."/>
            <person name="Miranda M."/>
            <person name="Nguyen M."/>
            <person name="Nierman W.C."/>
            <person name="Osborne B.I."/>
            <person name="Pai G."/>
            <person name="Peterson J."/>
            <person name="Pham P.K."/>
            <person name="Rizzo M."/>
            <person name="Rooney T."/>
            <person name="Rowley D."/>
            <person name="Sakano H."/>
            <person name="Salzberg S.L."/>
            <person name="Schwartz J.R."/>
            <person name="Shinn P."/>
            <person name="Southwick A.M."/>
            <person name="Sun H."/>
            <person name="Tallon L.J."/>
            <person name="Tambunga G."/>
            <person name="Toriumi M.J."/>
            <person name="Town C.D."/>
            <person name="Utterback T."/>
            <person name="Van Aken S."/>
            <person name="Vaysberg M."/>
            <person name="Vysotskaia V.S."/>
            <person name="Walker M."/>
            <person name="Wu D."/>
            <person name="Yu G."/>
            <person name="Fraser C.M."/>
            <person name="Venter J.C."/>
            <person name="Davis R.W."/>
        </authorList>
    </citation>
    <scope>NUCLEOTIDE SEQUENCE [LARGE SCALE GENOMIC DNA]</scope>
    <source>
        <strain>cv. Columbia</strain>
    </source>
</reference>
<reference key="2">
    <citation type="journal article" date="2017" name="Plant J.">
        <title>Araport11: a complete reannotation of the Arabidopsis thaliana reference genome.</title>
        <authorList>
            <person name="Cheng C.Y."/>
            <person name="Krishnakumar V."/>
            <person name="Chan A.P."/>
            <person name="Thibaud-Nissen F."/>
            <person name="Schobel S."/>
            <person name="Town C.D."/>
        </authorList>
    </citation>
    <scope>GENOME REANNOTATION</scope>
    <source>
        <strain>cv. Columbia</strain>
    </source>
</reference>
<reference key="3">
    <citation type="submission" date="2006-07" db="EMBL/GenBank/DDBJ databases">
        <title>Large-scale analysis of RIKEN Arabidopsis full-length (RAFL) cDNAs.</title>
        <authorList>
            <person name="Totoki Y."/>
            <person name="Seki M."/>
            <person name="Ishida J."/>
            <person name="Nakajima M."/>
            <person name="Enju A."/>
            <person name="Kamiya A."/>
            <person name="Narusaka M."/>
            <person name="Shin-i T."/>
            <person name="Nakagawa M."/>
            <person name="Sakamoto N."/>
            <person name="Oishi K."/>
            <person name="Kohara Y."/>
            <person name="Kobayashi M."/>
            <person name="Toyoda A."/>
            <person name="Sakaki Y."/>
            <person name="Sakurai T."/>
            <person name="Iida K."/>
            <person name="Akiyama K."/>
            <person name="Satou M."/>
            <person name="Toyoda T."/>
            <person name="Konagaya A."/>
            <person name="Carninci P."/>
            <person name="Kawai J."/>
            <person name="Hayashizaki Y."/>
            <person name="Shinozaki K."/>
        </authorList>
    </citation>
    <scope>NUCLEOTIDE SEQUENCE [LARGE SCALE MRNA] (ISOFORM 1)</scope>
    <source>
        <strain>cv. Columbia</strain>
    </source>
</reference>
<reference key="4">
    <citation type="submission" date="2002-03" db="EMBL/GenBank/DDBJ databases">
        <title>Full-length cDNA from Arabidopsis thaliana.</title>
        <authorList>
            <person name="Brover V.V."/>
            <person name="Troukhan M.E."/>
            <person name="Alexandrov N.A."/>
            <person name="Lu Y.-P."/>
            <person name="Flavell R.B."/>
            <person name="Feldmann K.A."/>
        </authorList>
    </citation>
    <scope>NUCLEOTIDE SEQUENCE [LARGE SCALE MRNA] (ISOFORM 1)</scope>
</reference>
<reference key="5">
    <citation type="journal article" date="2014" name="Nature">
        <title>Carbonic anhydrases, EPF2 and a novel protease mediate CO2 control of stomatal development.</title>
        <authorList>
            <person name="Engineer C.B."/>
            <person name="Ghassemian M."/>
            <person name="Anderson J.C."/>
            <person name="Peck S.C."/>
            <person name="Hu H."/>
            <person name="Schroeder J.I."/>
        </authorList>
    </citation>
    <scope>FUNCTION</scope>
    <scope>INDUCTION BY CO(2)</scope>
    <scope>TISSUE SPECIFICITY</scope>
    <scope>SUBCELLULAR LOCATION</scope>
    <scope>DISRUPTION PHENOTYPE</scope>
</reference>
<gene>
    <name evidence="5" type="primary">CRSP</name>
    <name evidence="5" type="synonym">SBT5.2</name>
    <name evidence="7" type="ordered locus">At1g20160</name>
    <name evidence="8" type="ORF">T20H2.6</name>
</gene>
<name>CRSP_ARATH</name>
<organism>
    <name type="scientific">Arabidopsis thaliana</name>
    <name type="common">Mouse-ear cress</name>
    <dbReference type="NCBI Taxonomy" id="3702"/>
    <lineage>
        <taxon>Eukaryota</taxon>
        <taxon>Viridiplantae</taxon>
        <taxon>Streptophyta</taxon>
        <taxon>Embryophyta</taxon>
        <taxon>Tracheophyta</taxon>
        <taxon>Spermatophyta</taxon>
        <taxon>Magnoliopsida</taxon>
        <taxon>eudicotyledons</taxon>
        <taxon>Gunneridae</taxon>
        <taxon>Pentapetalae</taxon>
        <taxon>rosids</taxon>
        <taxon>malvids</taxon>
        <taxon>Brassicales</taxon>
        <taxon>Brassicaceae</taxon>
        <taxon>Camelineae</taxon>
        <taxon>Arabidopsis</taxon>
    </lineage>
</organism>
<protein>
    <recommendedName>
        <fullName evidence="5">CO(2)-response secreted protease</fullName>
    </recommendedName>
    <alternativeName>
        <fullName evidence="5">Subtilisin-like serine protease</fullName>
        <shortName evidence="5">AtSBT5.2</shortName>
    </alternativeName>
    <alternativeName>
        <fullName evidence="3">Tripeptidyl-peptidase II</fullName>
        <ecNumber evidence="3">3.4.14.10</ecNumber>
    </alternativeName>
</protein>
<sequence>MKGITFFTPFLSFLYLLCILFMTETEAGSRNGDGVYIVYMGSASSAANANRAQILINTMFKRRANDLLHTYKHGFSGFAARLTAEEAKVIAKKPGVVSVFPDPHFQLHTTHSWDFLKYQTSVKVDSGPPSSASDGSYDSIVGILDTGIWPESESFNDKDMGPIPSRWKGTCMEAKDFKSSNCNRKIIGARYYKNPDDDSEYYTTRDVIGHGSHVSSTIAGSAVENASYYGVASGTAKGGSQNARIAMYKVCNPGGCTGSSILAAFDDAIADGVDVLSLSLGAPAYARIDLNTDPIAIGAFHAVEQGILVICSAGNDGPDGGTVTNTAPWIMTVAANTIDRDFESDVVLGGNKVIKGEGIHFSNVSKSPVYPLIHGKSAKSADASEGSARACDSDSLDQEKVKGKIVLCENVGGSYYASSARDEVKSKGGTGCVFVDDRTRAVASAYGSFPTTVIDSKEAAEIFSYLNSTKDPVATILPTATVEKFTPAPAVAYFSSRGPSSLTRSILKPDITAPGVSILAAWTGNDSSISLEGKPASQYNVISGTSMAAPHVSAVASLIKSQHPTWGPSAIRSAIMTTATQTNNDKGLITTETGATATPYDSGAGELSSTASMQPGLVYETTETDYLNFLCYYGYNVTTIKAMSKAFPENFTCPADSNLDLISTINYPSIGISGFKGNGSKTVTRTVTNVGEDGEAVYTVSVETPPGFNIQVTPEKLQFTKDGEKLTYQVIVSATASLKQDVFGALTWSNAKYKVRSPIVISSESSRTN</sequence>
<keyword id="KW-0025">Alternative splicing</keyword>
<keyword id="KW-0134">Cell wall</keyword>
<keyword id="KW-0378">Hydrolase</keyword>
<keyword id="KW-0645">Protease</keyword>
<keyword id="KW-1185">Reference proteome</keyword>
<keyword id="KW-0964">Secreted</keyword>
<keyword id="KW-0720">Serine protease</keyword>
<keyword id="KW-0732">Signal</keyword>